<reference key="1">
    <citation type="journal article" date="2004" name="Mol. Biol. Evol.">
        <title>Complete sequences of the highly rearranged molluscan mitochondrial genomes of the scaphopod Graptacme eborea and the bivalve Mytilus edulis.</title>
        <authorList>
            <person name="Boore J.L."/>
            <person name="Medina M."/>
            <person name="Rosenberg L.A."/>
        </authorList>
    </citation>
    <scope>NUCLEOTIDE SEQUENCE [GENOMIC DNA]</scope>
    <scope>SEQUENCE REVISION TO 442-457</scope>
</reference>
<reference key="2">
    <citation type="journal article" date="1992" name="Genetics">
        <title>A novel mitochondrial genome organization for the blue mussel, Mytilus edulis.</title>
        <authorList>
            <person name="Hoffmann R.J."/>
            <person name="Boore J.L."/>
            <person name="Brown W.M."/>
        </authorList>
    </citation>
    <scope>NUCLEOTIDE SEQUENCE [GENOMIC DNA] OF 1-457 AND 504-568</scope>
</reference>
<proteinExistence type="inferred from homology"/>
<feature type="chain" id="PRO_0000118116" description="NADH-ubiquinone oxidoreductase chain 5">
    <location>
        <begin position="1"/>
        <end position="568"/>
    </location>
</feature>
<feature type="transmembrane region" description="Helical" evidence="2">
    <location>
        <begin position="7"/>
        <end position="27"/>
    </location>
</feature>
<feature type="transmembrane region" description="Helical" evidence="2">
    <location>
        <begin position="44"/>
        <end position="64"/>
    </location>
</feature>
<feature type="transmembrane region" description="Helical" evidence="2">
    <location>
        <begin position="90"/>
        <end position="110"/>
    </location>
</feature>
<feature type="transmembrane region" description="Helical" evidence="2">
    <location>
        <begin position="144"/>
        <end position="164"/>
    </location>
</feature>
<feature type="transmembrane region" description="Helical" evidence="2">
    <location>
        <begin position="165"/>
        <end position="185"/>
    </location>
</feature>
<feature type="transmembrane region" description="Helical" evidence="2">
    <location>
        <begin position="210"/>
        <end position="232"/>
    </location>
</feature>
<feature type="transmembrane region" description="Helical" evidence="2">
    <location>
        <begin position="240"/>
        <end position="260"/>
    </location>
</feature>
<feature type="transmembrane region" description="Helical" evidence="2">
    <location>
        <begin position="274"/>
        <end position="294"/>
    </location>
</feature>
<feature type="transmembrane region" description="Helical" evidence="2">
    <location>
        <begin position="297"/>
        <end position="317"/>
    </location>
</feature>
<feature type="transmembrane region" description="Helical" evidence="2">
    <location>
        <begin position="334"/>
        <end position="354"/>
    </location>
</feature>
<feature type="transmembrane region" description="Helical" evidence="2">
    <location>
        <begin position="378"/>
        <end position="398"/>
    </location>
</feature>
<feature type="transmembrane region" description="Helical" evidence="2">
    <location>
        <begin position="426"/>
        <end position="446"/>
    </location>
</feature>
<feature type="transmembrane region" description="Helical" evidence="2">
    <location>
        <begin position="452"/>
        <end position="472"/>
    </location>
</feature>
<feature type="transmembrane region" description="Helical" evidence="2">
    <location>
        <begin position="547"/>
        <end position="567"/>
    </location>
</feature>
<geneLocation type="mitochondrion"/>
<sequence length="568" mass="62297">MQSKGNLGLLMLILTGYLFIFTGSSFGSAYLLEVPVWESNCLSFSFSFLLDNVSMIFVGTVLVISGSVATYCKWYMAEELYYNRFMGLVWLFVLSMVFMILVPNLLMLLIGWDGLGLTSFLLVAYYQNNKSLSAAMLTALTNRIGDVLVLISISIFLSEGGWLIYSYHPVQMWLNLGFMVVFAGMTKSAQMPFCAWLPAAMAAPTPVSSLVHSSTLVTAGVYLVLRSFYIISSNPYVTQVLMILSLFTLVLAGSSAVFAFDLKKVIALSTLSQLSLMMFSISILLPSVAFFHLVTHAVFKALLFLGAGGVIHSNQSIQDIRGLSSLWQGLPVSMGAMSVAIVSLSGAPFMSGFFSKDLMIELSMMDSSVTYGCYLLELLGLIFTSFYSARIVFSVMLGSNYVNNSTLRINEHLNMQTPFLSLYIGAIILGVVLGSKMESFGFVVVLENYESLSVFFIPFAGLILWRGVISKLGSSPWSSAKSLSFFLSMWFMESLTSHPGKVIFFKGSSTVAQSLDQGWLELLGPQGVHAGLGQFSCLNEIVQKNYFTYQLVVWGLLVAGGVSLIIFM</sequence>
<protein>
    <recommendedName>
        <fullName>NADH-ubiquinone oxidoreductase chain 5</fullName>
        <ecNumber>7.1.1.2</ecNumber>
    </recommendedName>
    <alternativeName>
        <fullName>NADH dehydrogenase subunit 5</fullName>
    </alternativeName>
</protein>
<organism>
    <name type="scientific">Mytilus edulis</name>
    <name type="common">Blue mussel</name>
    <dbReference type="NCBI Taxonomy" id="6550"/>
    <lineage>
        <taxon>Eukaryota</taxon>
        <taxon>Metazoa</taxon>
        <taxon>Spiralia</taxon>
        <taxon>Lophotrochozoa</taxon>
        <taxon>Mollusca</taxon>
        <taxon>Bivalvia</taxon>
        <taxon>Autobranchia</taxon>
        <taxon>Pteriomorphia</taxon>
        <taxon>Mytilida</taxon>
        <taxon>Mytiloidea</taxon>
        <taxon>Mytilidae</taxon>
        <taxon>Mytilinae</taxon>
        <taxon>Mytilus</taxon>
    </lineage>
</organism>
<gene>
    <name type="primary">ND5</name>
</gene>
<dbReference type="EC" id="7.1.1.2"/>
<dbReference type="EMBL" id="AY484747">
    <property type="protein sequence ID" value="AAT98412.1"/>
    <property type="molecule type" value="Genomic_DNA"/>
</dbReference>
<dbReference type="PIR" id="S28760">
    <property type="entry name" value="S28743"/>
</dbReference>
<dbReference type="RefSeq" id="YP_073346.1">
    <property type="nucleotide sequence ID" value="NC_006161.1"/>
</dbReference>
<dbReference type="SMR" id="Q00232"/>
<dbReference type="GO" id="GO:0005743">
    <property type="term" value="C:mitochondrial inner membrane"/>
    <property type="evidence" value="ECO:0007669"/>
    <property type="project" value="UniProtKB-SubCell"/>
</dbReference>
<dbReference type="GO" id="GO:0008137">
    <property type="term" value="F:NADH dehydrogenase (ubiquinone) activity"/>
    <property type="evidence" value="ECO:0007669"/>
    <property type="project" value="UniProtKB-EC"/>
</dbReference>
<dbReference type="GO" id="GO:0042773">
    <property type="term" value="P:ATP synthesis coupled electron transport"/>
    <property type="evidence" value="ECO:0007669"/>
    <property type="project" value="InterPro"/>
</dbReference>
<dbReference type="GO" id="GO:0015990">
    <property type="term" value="P:electron transport coupled proton transport"/>
    <property type="evidence" value="ECO:0007669"/>
    <property type="project" value="TreeGrafter"/>
</dbReference>
<dbReference type="InterPro" id="IPR010934">
    <property type="entry name" value="NADH_DH_su5_C"/>
</dbReference>
<dbReference type="InterPro" id="IPR001750">
    <property type="entry name" value="ND/Mrp_TM"/>
</dbReference>
<dbReference type="InterPro" id="IPR003945">
    <property type="entry name" value="NU5C-like"/>
</dbReference>
<dbReference type="InterPro" id="IPR001516">
    <property type="entry name" value="Proton_antipo_N"/>
</dbReference>
<dbReference type="PANTHER" id="PTHR42829">
    <property type="entry name" value="NADH-UBIQUINONE OXIDOREDUCTASE CHAIN 5"/>
    <property type="match status" value="1"/>
</dbReference>
<dbReference type="PANTHER" id="PTHR42829:SF2">
    <property type="entry name" value="NADH-UBIQUINONE OXIDOREDUCTASE CHAIN 5"/>
    <property type="match status" value="1"/>
</dbReference>
<dbReference type="Pfam" id="PF06455">
    <property type="entry name" value="NADH5_C"/>
    <property type="match status" value="1"/>
</dbReference>
<dbReference type="Pfam" id="PF00361">
    <property type="entry name" value="Proton_antipo_M"/>
    <property type="match status" value="1"/>
</dbReference>
<dbReference type="Pfam" id="PF00662">
    <property type="entry name" value="Proton_antipo_N"/>
    <property type="match status" value="1"/>
</dbReference>
<dbReference type="PRINTS" id="PR01434">
    <property type="entry name" value="NADHDHGNASE5"/>
</dbReference>
<name>NU5M_MYTED</name>
<accession>Q00232</accession>
<accession>Q68SQ8</accession>
<keyword id="KW-0249">Electron transport</keyword>
<keyword id="KW-0472">Membrane</keyword>
<keyword id="KW-0496">Mitochondrion</keyword>
<keyword id="KW-0999">Mitochondrion inner membrane</keyword>
<keyword id="KW-0520">NAD</keyword>
<keyword id="KW-0679">Respiratory chain</keyword>
<keyword id="KW-1278">Translocase</keyword>
<keyword id="KW-0812">Transmembrane</keyword>
<keyword id="KW-1133">Transmembrane helix</keyword>
<keyword id="KW-0813">Transport</keyword>
<keyword id="KW-0830">Ubiquinone</keyword>
<evidence type="ECO:0000250" key="1"/>
<evidence type="ECO:0000255" key="2"/>
<evidence type="ECO:0000305" key="3"/>
<comment type="function">
    <text evidence="1">Core subunit of the mitochondrial membrane respiratory chain NADH dehydrogenase (Complex I) that is believed to belong to the minimal assembly required for catalysis. Complex I functions in the transfer of electrons from NADH to the respiratory chain. The immediate electron acceptor for the enzyme is believed to be ubiquinone (By similarity).</text>
</comment>
<comment type="catalytic activity">
    <reaction>
        <text>a ubiquinone + NADH + 5 H(+)(in) = a ubiquinol + NAD(+) + 4 H(+)(out)</text>
        <dbReference type="Rhea" id="RHEA:29091"/>
        <dbReference type="Rhea" id="RHEA-COMP:9565"/>
        <dbReference type="Rhea" id="RHEA-COMP:9566"/>
        <dbReference type="ChEBI" id="CHEBI:15378"/>
        <dbReference type="ChEBI" id="CHEBI:16389"/>
        <dbReference type="ChEBI" id="CHEBI:17976"/>
        <dbReference type="ChEBI" id="CHEBI:57540"/>
        <dbReference type="ChEBI" id="CHEBI:57945"/>
        <dbReference type="EC" id="7.1.1.2"/>
    </reaction>
</comment>
<comment type="subcellular location">
    <subcellularLocation>
        <location evidence="1">Mitochondrion inner membrane</location>
        <topology evidence="1">Multi-pass membrane protein</topology>
    </subcellularLocation>
</comment>
<comment type="similarity">
    <text evidence="3">Belongs to the complex I subunit 5 family.</text>
</comment>